<dbReference type="EC" id="1.2.1.38" evidence="1"/>
<dbReference type="EMBL" id="CU207366">
    <property type="protein sequence ID" value="CAL67071.1"/>
    <property type="molecule type" value="Genomic_DNA"/>
</dbReference>
<dbReference type="RefSeq" id="WP_011709974.1">
    <property type="nucleotide sequence ID" value="NC_008571.1"/>
</dbReference>
<dbReference type="SMR" id="A0M376"/>
<dbReference type="STRING" id="411154.GFO_2106"/>
<dbReference type="KEGG" id="gfo:GFO_2106"/>
<dbReference type="eggNOG" id="COG0002">
    <property type="taxonomic scope" value="Bacteria"/>
</dbReference>
<dbReference type="HOGENOM" id="CLU_006384_0_1_10"/>
<dbReference type="OrthoDB" id="9801289at2"/>
<dbReference type="UniPathway" id="UPA00068">
    <property type="reaction ID" value="UER00108"/>
</dbReference>
<dbReference type="Proteomes" id="UP000000755">
    <property type="component" value="Chromosome"/>
</dbReference>
<dbReference type="GO" id="GO:0005737">
    <property type="term" value="C:cytoplasm"/>
    <property type="evidence" value="ECO:0007669"/>
    <property type="project" value="UniProtKB-SubCell"/>
</dbReference>
<dbReference type="GO" id="GO:0003942">
    <property type="term" value="F:N-acetyl-gamma-glutamyl-phosphate reductase activity"/>
    <property type="evidence" value="ECO:0007669"/>
    <property type="project" value="UniProtKB-UniRule"/>
</dbReference>
<dbReference type="GO" id="GO:0051287">
    <property type="term" value="F:NAD binding"/>
    <property type="evidence" value="ECO:0007669"/>
    <property type="project" value="InterPro"/>
</dbReference>
<dbReference type="GO" id="GO:0070401">
    <property type="term" value="F:NADP+ binding"/>
    <property type="evidence" value="ECO:0007669"/>
    <property type="project" value="InterPro"/>
</dbReference>
<dbReference type="GO" id="GO:0006526">
    <property type="term" value="P:L-arginine biosynthetic process"/>
    <property type="evidence" value="ECO:0007669"/>
    <property type="project" value="UniProtKB-UniRule"/>
</dbReference>
<dbReference type="CDD" id="cd23934">
    <property type="entry name" value="AGPR_1_C"/>
    <property type="match status" value="1"/>
</dbReference>
<dbReference type="CDD" id="cd17895">
    <property type="entry name" value="AGPR_1_N"/>
    <property type="match status" value="1"/>
</dbReference>
<dbReference type="Gene3D" id="3.30.360.10">
    <property type="entry name" value="Dihydrodipicolinate Reductase, domain 2"/>
    <property type="match status" value="1"/>
</dbReference>
<dbReference type="Gene3D" id="3.40.50.720">
    <property type="entry name" value="NAD(P)-binding Rossmann-like Domain"/>
    <property type="match status" value="1"/>
</dbReference>
<dbReference type="HAMAP" id="MF_00150">
    <property type="entry name" value="ArgC_type1"/>
    <property type="match status" value="1"/>
</dbReference>
<dbReference type="InterPro" id="IPR023013">
    <property type="entry name" value="AGPR_AS"/>
</dbReference>
<dbReference type="InterPro" id="IPR000706">
    <property type="entry name" value="AGPR_type-1"/>
</dbReference>
<dbReference type="InterPro" id="IPR036291">
    <property type="entry name" value="NAD(P)-bd_dom_sf"/>
</dbReference>
<dbReference type="InterPro" id="IPR050085">
    <property type="entry name" value="NAGSA_dehydrogenase"/>
</dbReference>
<dbReference type="InterPro" id="IPR000534">
    <property type="entry name" value="Semialdehyde_DH_NAD-bd"/>
</dbReference>
<dbReference type="NCBIfam" id="TIGR01850">
    <property type="entry name" value="argC"/>
    <property type="match status" value="1"/>
</dbReference>
<dbReference type="PANTHER" id="PTHR32338:SF10">
    <property type="entry name" value="N-ACETYL-GAMMA-GLUTAMYL-PHOSPHATE REDUCTASE, CHLOROPLASTIC-RELATED"/>
    <property type="match status" value="1"/>
</dbReference>
<dbReference type="PANTHER" id="PTHR32338">
    <property type="entry name" value="N-ACETYL-GAMMA-GLUTAMYL-PHOSPHATE REDUCTASE, CHLOROPLASTIC-RELATED-RELATED"/>
    <property type="match status" value="1"/>
</dbReference>
<dbReference type="Pfam" id="PF01118">
    <property type="entry name" value="Semialdhyde_dh"/>
    <property type="match status" value="1"/>
</dbReference>
<dbReference type="Pfam" id="PF22698">
    <property type="entry name" value="Semialdhyde_dhC_1"/>
    <property type="match status" value="1"/>
</dbReference>
<dbReference type="SMART" id="SM00859">
    <property type="entry name" value="Semialdhyde_dh"/>
    <property type="match status" value="1"/>
</dbReference>
<dbReference type="SUPFAM" id="SSF55347">
    <property type="entry name" value="Glyceraldehyde-3-phosphate dehydrogenase-like, C-terminal domain"/>
    <property type="match status" value="1"/>
</dbReference>
<dbReference type="SUPFAM" id="SSF51735">
    <property type="entry name" value="NAD(P)-binding Rossmann-fold domains"/>
    <property type="match status" value="1"/>
</dbReference>
<dbReference type="PROSITE" id="PS01224">
    <property type="entry name" value="ARGC"/>
    <property type="match status" value="1"/>
</dbReference>
<proteinExistence type="inferred from homology"/>
<keyword id="KW-0028">Amino-acid biosynthesis</keyword>
<keyword id="KW-0055">Arginine biosynthesis</keyword>
<keyword id="KW-0963">Cytoplasm</keyword>
<keyword id="KW-0521">NADP</keyword>
<keyword id="KW-0560">Oxidoreductase</keyword>
<protein>
    <recommendedName>
        <fullName evidence="1">N-acetyl-gamma-glutamyl-phosphate reductase</fullName>
        <shortName evidence="1">AGPR</shortName>
        <ecNumber evidence="1">1.2.1.38</ecNumber>
    </recommendedName>
    <alternativeName>
        <fullName evidence="1">N-acetyl-glutamate semialdehyde dehydrogenase</fullName>
        <shortName evidence="1">NAGSA dehydrogenase</shortName>
    </alternativeName>
</protein>
<comment type="function">
    <text evidence="1">Catalyzes the NADPH-dependent reduction of N-acetyl-5-glutamyl phosphate to yield N-acetyl-L-glutamate 5-semialdehyde.</text>
</comment>
<comment type="catalytic activity">
    <reaction evidence="1">
        <text>N-acetyl-L-glutamate 5-semialdehyde + phosphate + NADP(+) = N-acetyl-L-glutamyl 5-phosphate + NADPH + H(+)</text>
        <dbReference type="Rhea" id="RHEA:21588"/>
        <dbReference type="ChEBI" id="CHEBI:15378"/>
        <dbReference type="ChEBI" id="CHEBI:29123"/>
        <dbReference type="ChEBI" id="CHEBI:43474"/>
        <dbReference type="ChEBI" id="CHEBI:57783"/>
        <dbReference type="ChEBI" id="CHEBI:57936"/>
        <dbReference type="ChEBI" id="CHEBI:58349"/>
        <dbReference type="EC" id="1.2.1.38"/>
    </reaction>
</comment>
<comment type="pathway">
    <text evidence="1">Amino-acid biosynthesis; L-arginine biosynthesis; N(2)-acetyl-L-ornithine from L-glutamate: step 3/4.</text>
</comment>
<comment type="subcellular location">
    <subcellularLocation>
        <location evidence="1">Cytoplasm</location>
    </subcellularLocation>
</comment>
<comment type="similarity">
    <text evidence="1">Belongs to the NAGSA dehydrogenase family. Type 1 subfamily.</text>
</comment>
<accession>A0M376</accession>
<evidence type="ECO:0000255" key="1">
    <source>
        <dbReference type="HAMAP-Rule" id="MF_00150"/>
    </source>
</evidence>
<organism>
    <name type="scientific">Christiangramia forsetii (strain DSM 17595 / CGMCC 1.15422 / KT0803)</name>
    <name type="common">Gramella forsetii</name>
    <dbReference type="NCBI Taxonomy" id="411154"/>
    <lineage>
        <taxon>Bacteria</taxon>
        <taxon>Pseudomonadati</taxon>
        <taxon>Bacteroidota</taxon>
        <taxon>Flavobacteriia</taxon>
        <taxon>Flavobacteriales</taxon>
        <taxon>Flavobacteriaceae</taxon>
        <taxon>Christiangramia</taxon>
    </lineage>
</organism>
<sequence>MIEAGIIGGAGYTAGELIRILLHHPEVNLNFVYSTSQLGKSLYSIHQDLIGDTEIEFTSKINKEADVVFLCLGHGNSKRFLSENKFSEKTKIVDLSTDFRMKANDHSFVYGMPELNQEEIKNANFIANPGCFATAITFAVLPLAKNGLLNDDVHVNAVTGATGAGTSLSATTHFTWRDNNFSAYKSFEHQHLQEIGQSFKQLQSDHTSEINFIPNRGNFSRGIHATAYTKFSGELEDAKKLYSEFYKDAAFTFLTDEELHLKQVVNTNKCLLRLQKFGNKLLITSVIDNLLKGASGQAVQNMNLMFGLEEKMGLNLKAGYF</sequence>
<reference key="1">
    <citation type="journal article" date="2006" name="Environ. Microbiol.">
        <title>Whole genome analysis of the marine Bacteroidetes'Gramella forsetii' reveals adaptations to degradation of polymeric organic matter.</title>
        <authorList>
            <person name="Bauer M."/>
            <person name="Kube M."/>
            <person name="Teeling H."/>
            <person name="Richter M."/>
            <person name="Lombardot T."/>
            <person name="Allers E."/>
            <person name="Wuerdemann C.A."/>
            <person name="Quast C."/>
            <person name="Kuhl H."/>
            <person name="Knaust F."/>
            <person name="Woebken D."/>
            <person name="Bischof K."/>
            <person name="Mussmann M."/>
            <person name="Choudhuri J.V."/>
            <person name="Meyer F."/>
            <person name="Reinhardt R."/>
            <person name="Amann R.I."/>
            <person name="Gloeckner F.O."/>
        </authorList>
    </citation>
    <scope>NUCLEOTIDE SEQUENCE [LARGE SCALE GENOMIC DNA]</scope>
    <source>
        <strain>DSM 17595 / CGMCC 1.15422 / KT0803</strain>
    </source>
</reference>
<feature type="chain" id="PRO_1000010998" description="N-acetyl-gamma-glutamyl-phosphate reductase">
    <location>
        <begin position="1"/>
        <end position="321"/>
    </location>
</feature>
<feature type="active site" evidence="1">
    <location>
        <position position="131"/>
    </location>
</feature>
<gene>
    <name evidence="1" type="primary">argC</name>
    <name type="ordered locus">GFO_2106</name>
</gene>
<name>ARGC_CHRFK</name>